<keyword id="KW-0001">2Fe-2S</keyword>
<keyword id="KW-0004">4Fe-4S</keyword>
<keyword id="KW-0093">Biotin biosynthesis</keyword>
<keyword id="KW-0408">Iron</keyword>
<keyword id="KW-0411">Iron-sulfur</keyword>
<keyword id="KW-0479">Metal-binding</keyword>
<keyword id="KW-0949">S-adenosyl-L-methionine</keyword>
<keyword id="KW-0808">Transferase</keyword>
<comment type="function">
    <text evidence="1">Catalyzes the conversion of dethiobiotin (DTB) to biotin by the insertion of a sulfur atom into dethiobiotin via a radical-based mechanism.</text>
</comment>
<comment type="catalytic activity">
    <reaction evidence="1">
        <text>(4R,5S)-dethiobiotin + (sulfur carrier)-SH + 2 reduced [2Fe-2S]-[ferredoxin] + 2 S-adenosyl-L-methionine = (sulfur carrier)-H + biotin + 2 5'-deoxyadenosine + 2 L-methionine + 2 oxidized [2Fe-2S]-[ferredoxin]</text>
        <dbReference type="Rhea" id="RHEA:22060"/>
        <dbReference type="Rhea" id="RHEA-COMP:10000"/>
        <dbReference type="Rhea" id="RHEA-COMP:10001"/>
        <dbReference type="Rhea" id="RHEA-COMP:14737"/>
        <dbReference type="Rhea" id="RHEA-COMP:14739"/>
        <dbReference type="ChEBI" id="CHEBI:17319"/>
        <dbReference type="ChEBI" id="CHEBI:29917"/>
        <dbReference type="ChEBI" id="CHEBI:33737"/>
        <dbReference type="ChEBI" id="CHEBI:33738"/>
        <dbReference type="ChEBI" id="CHEBI:57586"/>
        <dbReference type="ChEBI" id="CHEBI:57844"/>
        <dbReference type="ChEBI" id="CHEBI:59789"/>
        <dbReference type="ChEBI" id="CHEBI:64428"/>
        <dbReference type="ChEBI" id="CHEBI:149473"/>
        <dbReference type="EC" id="2.8.1.6"/>
    </reaction>
</comment>
<comment type="cofactor">
    <cofactor evidence="1">
        <name>[4Fe-4S] cluster</name>
        <dbReference type="ChEBI" id="CHEBI:49883"/>
    </cofactor>
    <text evidence="1">Binds 1 [4Fe-4S] cluster. The cluster is coordinated with 3 cysteines and an exchangeable S-adenosyl-L-methionine.</text>
</comment>
<comment type="cofactor">
    <cofactor evidence="1">
        <name>[2Fe-2S] cluster</name>
        <dbReference type="ChEBI" id="CHEBI:190135"/>
    </cofactor>
    <text evidence="1">Binds 1 [2Fe-2S] cluster. The cluster is coordinated with 3 cysteines and 1 arginine.</text>
</comment>
<comment type="pathway">
    <text evidence="1">Cofactor biosynthesis; biotin biosynthesis; biotin from 7,8-diaminononanoate: step 2/2.</text>
</comment>
<comment type="subunit">
    <text evidence="1">Homodimer.</text>
</comment>
<comment type="similarity">
    <text evidence="1">Belongs to the radical SAM superfamily. Biotin synthase family.</text>
</comment>
<dbReference type="EC" id="2.8.1.6" evidence="1"/>
<dbReference type="EMBL" id="CP000151">
    <property type="protein sequence ID" value="ABB09872.1"/>
    <property type="molecule type" value="Genomic_DNA"/>
</dbReference>
<dbReference type="RefSeq" id="WP_011353378.1">
    <property type="nucleotide sequence ID" value="NC_007510.1"/>
</dbReference>
<dbReference type="SMR" id="Q39CE4"/>
<dbReference type="GeneID" id="45096150"/>
<dbReference type="KEGG" id="bur:Bcep18194_A6278"/>
<dbReference type="PATRIC" id="fig|482957.22.peg.3295"/>
<dbReference type="HOGENOM" id="CLU_033172_1_2_4"/>
<dbReference type="UniPathway" id="UPA00078">
    <property type="reaction ID" value="UER00162"/>
</dbReference>
<dbReference type="Proteomes" id="UP000002705">
    <property type="component" value="Chromosome 1"/>
</dbReference>
<dbReference type="GO" id="GO:0051537">
    <property type="term" value="F:2 iron, 2 sulfur cluster binding"/>
    <property type="evidence" value="ECO:0007669"/>
    <property type="project" value="UniProtKB-KW"/>
</dbReference>
<dbReference type="GO" id="GO:0051539">
    <property type="term" value="F:4 iron, 4 sulfur cluster binding"/>
    <property type="evidence" value="ECO:0007669"/>
    <property type="project" value="UniProtKB-KW"/>
</dbReference>
<dbReference type="GO" id="GO:0004076">
    <property type="term" value="F:biotin synthase activity"/>
    <property type="evidence" value="ECO:0007669"/>
    <property type="project" value="UniProtKB-UniRule"/>
</dbReference>
<dbReference type="GO" id="GO:0005506">
    <property type="term" value="F:iron ion binding"/>
    <property type="evidence" value="ECO:0007669"/>
    <property type="project" value="UniProtKB-UniRule"/>
</dbReference>
<dbReference type="GO" id="GO:0009102">
    <property type="term" value="P:biotin biosynthetic process"/>
    <property type="evidence" value="ECO:0007669"/>
    <property type="project" value="UniProtKB-UniRule"/>
</dbReference>
<dbReference type="CDD" id="cd01335">
    <property type="entry name" value="Radical_SAM"/>
    <property type="match status" value="1"/>
</dbReference>
<dbReference type="FunFam" id="3.20.20.70:FF:000011">
    <property type="entry name" value="Biotin synthase"/>
    <property type="match status" value="1"/>
</dbReference>
<dbReference type="Gene3D" id="3.20.20.70">
    <property type="entry name" value="Aldolase class I"/>
    <property type="match status" value="1"/>
</dbReference>
<dbReference type="HAMAP" id="MF_01694">
    <property type="entry name" value="BioB"/>
    <property type="match status" value="1"/>
</dbReference>
<dbReference type="InterPro" id="IPR013785">
    <property type="entry name" value="Aldolase_TIM"/>
</dbReference>
<dbReference type="InterPro" id="IPR010722">
    <property type="entry name" value="BATS_dom"/>
</dbReference>
<dbReference type="InterPro" id="IPR002684">
    <property type="entry name" value="Biotin_synth/BioAB"/>
</dbReference>
<dbReference type="InterPro" id="IPR024177">
    <property type="entry name" value="Biotin_synthase"/>
</dbReference>
<dbReference type="InterPro" id="IPR006638">
    <property type="entry name" value="Elp3/MiaA/NifB-like_rSAM"/>
</dbReference>
<dbReference type="InterPro" id="IPR007197">
    <property type="entry name" value="rSAM"/>
</dbReference>
<dbReference type="NCBIfam" id="TIGR00433">
    <property type="entry name" value="bioB"/>
    <property type="match status" value="1"/>
</dbReference>
<dbReference type="PANTHER" id="PTHR22976">
    <property type="entry name" value="BIOTIN SYNTHASE"/>
    <property type="match status" value="1"/>
</dbReference>
<dbReference type="PANTHER" id="PTHR22976:SF2">
    <property type="entry name" value="BIOTIN SYNTHASE, MITOCHONDRIAL"/>
    <property type="match status" value="1"/>
</dbReference>
<dbReference type="Pfam" id="PF06968">
    <property type="entry name" value="BATS"/>
    <property type="match status" value="1"/>
</dbReference>
<dbReference type="Pfam" id="PF04055">
    <property type="entry name" value="Radical_SAM"/>
    <property type="match status" value="1"/>
</dbReference>
<dbReference type="PIRSF" id="PIRSF001619">
    <property type="entry name" value="Biotin_synth"/>
    <property type="match status" value="1"/>
</dbReference>
<dbReference type="SFLD" id="SFLDF00272">
    <property type="entry name" value="biotin_synthase"/>
    <property type="match status" value="1"/>
</dbReference>
<dbReference type="SFLD" id="SFLDG01278">
    <property type="entry name" value="biotin_synthase_like"/>
    <property type="match status" value="1"/>
</dbReference>
<dbReference type="SMART" id="SM00876">
    <property type="entry name" value="BATS"/>
    <property type="match status" value="1"/>
</dbReference>
<dbReference type="SMART" id="SM00729">
    <property type="entry name" value="Elp3"/>
    <property type="match status" value="1"/>
</dbReference>
<dbReference type="SUPFAM" id="SSF102114">
    <property type="entry name" value="Radical SAM enzymes"/>
    <property type="match status" value="1"/>
</dbReference>
<dbReference type="PROSITE" id="PS51918">
    <property type="entry name" value="RADICAL_SAM"/>
    <property type="match status" value="1"/>
</dbReference>
<proteinExistence type="inferred from homology"/>
<organism>
    <name type="scientific">Burkholderia lata (strain ATCC 17760 / DSM 23089 / LMG 22485 / NCIMB 9086 / R18194 / 383)</name>
    <dbReference type="NCBI Taxonomy" id="482957"/>
    <lineage>
        <taxon>Bacteria</taxon>
        <taxon>Pseudomonadati</taxon>
        <taxon>Pseudomonadota</taxon>
        <taxon>Betaproteobacteria</taxon>
        <taxon>Burkholderiales</taxon>
        <taxon>Burkholderiaceae</taxon>
        <taxon>Burkholderia</taxon>
        <taxon>Burkholderia cepacia complex</taxon>
    </lineage>
</organism>
<feature type="chain" id="PRO_0000381275" description="Biotin synthase">
    <location>
        <begin position="1"/>
        <end position="340"/>
    </location>
</feature>
<feature type="domain" description="Radical SAM core" evidence="2">
    <location>
        <begin position="56"/>
        <end position="283"/>
    </location>
</feature>
<feature type="binding site" evidence="1">
    <location>
        <position position="71"/>
    </location>
    <ligand>
        <name>[4Fe-4S] cluster</name>
        <dbReference type="ChEBI" id="CHEBI:49883"/>
        <note>4Fe-4S-S-AdoMet</note>
    </ligand>
</feature>
<feature type="binding site" evidence="1">
    <location>
        <position position="75"/>
    </location>
    <ligand>
        <name>[4Fe-4S] cluster</name>
        <dbReference type="ChEBI" id="CHEBI:49883"/>
        <note>4Fe-4S-S-AdoMet</note>
    </ligand>
</feature>
<feature type="binding site" evidence="1">
    <location>
        <position position="78"/>
    </location>
    <ligand>
        <name>[4Fe-4S] cluster</name>
        <dbReference type="ChEBI" id="CHEBI:49883"/>
        <note>4Fe-4S-S-AdoMet</note>
    </ligand>
</feature>
<feature type="binding site" evidence="1">
    <location>
        <position position="115"/>
    </location>
    <ligand>
        <name>[2Fe-2S] cluster</name>
        <dbReference type="ChEBI" id="CHEBI:190135"/>
    </ligand>
</feature>
<feature type="binding site" evidence="1">
    <location>
        <position position="146"/>
    </location>
    <ligand>
        <name>[2Fe-2S] cluster</name>
        <dbReference type="ChEBI" id="CHEBI:190135"/>
    </ligand>
</feature>
<feature type="binding site" evidence="1">
    <location>
        <position position="206"/>
    </location>
    <ligand>
        <name>[2Fe-2S] cluster</name>
        <dbReference type="ChEBI" id="CHEBI:190135"/>
    </ligand>
</feature>
<feature type="binding site" evidence="1">
    <location>
        <position position="278"/>
    </location>
    <ligand>
        <name>[2Fe-2S] cluster</name>
        <dbReference type="ChEBI" id="CHEBI:190135"/>
    </ligand>
</feature>
<protein>
    <recommendedName>
        <fullName evidence="1">Biotin synthase</fullName>
        <ecNumber evidence="1">2.8.1.6</ecNumber>
    </recommendedName>
</protein>
<accession>Q39CE4</accession>
<gene>
    <name evidence="1" type="primary">bioB</name>
    <name type="ordered locus">Bcep18194_A6278</name>
</gene>
<name>BIOB_BURL3</name>
<reference key="1">
    <citation type="submission" date="2005-10" db="EMBL/GenBank/DDBJ databases">
        <title>Complete sequence of chromosome 1 of Burkholderia sp. 383.</title>
        <authorList>
            <consortium name="US DOE Joint Genome Institute"/>
            <person name="Copeland A."/>
            <person name="Lucas S."/>
            <person name="Lapidus A."/>
            <person name="Barry K."/>
            <person name="Detter J.C."/>
            <person name="Glavina T."/>
            <person name="Hammon N."/>
            <person name="Israni S."/>
            <person name="Pitluck S."/>
            <person name="Chain P."/>
            <person name="Malfatti S."/>
            <person name="Shin M."/>
            <person name="Vergez L."/>
            <person name="Schmutz J."/>
            <person name="Larimer F."/>
            <person name="Land M."/>
            <person name="Kyrpides N."/>
            <person name="Lykidis A."/>
            <person name="Richardson P."/>
        </authorList>
    </citation>
    <scope>NUCLEOTIDE SEQUENCE [LARGE SCALE GENOMIC DNA]</scope>
    <source>
        <strain>ATCC 17760 / DSM 23089 / LMG 22485 / NCIMB 9086 / R18194 / 383</strain>
    </source>
</reference>
<evidence type="ECO:0000255" key="1">
    <source>
        <dbReference type="HAMAP-Rule" id="MF_01694"/>
    </source>
</evidence>
<evidence type="ECO:0000255" key="2">
    <source>
        <dbReference type="PROSITE-ProRule" id="PRU01266"/>
    </source>
</evidence>
<sequence length="340" mass="37001">MTQAQTAATVQPDAIPVAAPVSQRWRVADVVALFELPFNDLLFRAQQVHREHFDANAVQLSTLLSIKTGGCEEDCGYCSQSSHHDTGLKAEKLMDVDAVLDAARAAKANGASRFCMGAAWRNPKERHMPALTEMVRGVKELGLETCMTLGMLEDEQAQELASAGLDYYNHNLDTSPEFYGQVISTRTYQDRLDTLDRVRDAGINVCCGGIIGMGESRRERAGLISQLANLNPYPDSVPINNLVAIEGTPLEGTAPLDPFEFVRTIAVARITMPKAVVRLSAGREQLDDGLQAMCFLAGANSMFYGDQLLTTSNPQSQKDRALFERLGIRSSDADAMSANA</sequence>